<keyword id="KW-0130">Cell adhesion</keyword>
<keyword id="KW-1015">Disulfide bond</keyword>
<keyword id="KW-0237">DNA synthesis</keyword>
<keyword id="KW-0272">Extracellular matrix</keyword>
<keyword id="KW-0358">Heparin-binding</keyword>
<keyword id="KW-1185">Reference proteome</keyword>
<keyword id="KW-0964">Secreted</keyword>
<keyword id="KW-0732">Signal</keyword>
<gene>
    <name evidence="10" type="primary">Ccn2</name>
    <name type="synonym">Ctgf</name>
</gene>
<evidence type="ECO:0000250" key="1"/>
<evidence type="ECO:0000250" key="2">
    <source>
        <dbReference type="UniProtKB" id="P29268"/>
    </source>
</evidence>
<evidence type="ECO:0000250" key="3">
    <source>
        <dbReference type="UniProtKB" id="P29279"/>
    </source>
</evidence>
<evidence type="ECO:0000255" key="4"/>
<evidence type="ECO:0000255" key="5">
    <source>
        <dbReference type="PROSITE-ProRule" id="PRU00039"/>
    </source>
</evidence>
<evidence type="ECO:0000255" key="6">
    <source>
        <dbReference type="PROSITE-ProRule" id="PRU00210"/>
    </source>
</evidence>
<evidence type="ECO:0000255" key="7">
    <source>
        <dbReference type="PROSITE-ProRule" id="PRU00220"/>
    </source>
</evidence>
<evidence type="ECO:0000255" key="8">
    <source>
        <dbReference type="PROSITE-ProRule" id="PRU00653"/>
    </source>
</evidence>
<evidence type="ECO:0000305" key="9"/>
<evidence type="ECO:0000312" key="10">
    <source>
        <dbReference type="RGD" id="621392"/>
    </source>
</evidence>
<sequence>MLASVAGPVSLALVLLLCTRPATGQDCSAQCQCAAEAAPRCPAGVSLVLDGCGCCRVCAKQLGELCTERDPCDPHKGLFCDFGSPANRKIGVCTAKDGAPCVFGGSVYRSGESFQSSCKYQCTCLDGAVGCVPLCSMDVRLPSPDCPFPRRVKLPGKCCEEWVCDEPKDRTVVGPALAAYRLEDTFGPDPTMMRANCLVQTTEWSACSKTCGMGISTRVTNDNTFCRLEKQSRLCMVRPCEADLEENIKKGKKCIRTPKIAKPVKFELSGCTSVKTYRAKFCGVCTDGRCCTPHRTTTLPVEFKCPDGEIMKKNMMFIKTCACHYNCPGDNDIFESLYYRKMYGDMA</sequence>
<proteinExistence type="evidence at transcript level"/>
<reference key="1">
    <citation type="journal article" date="2000" name="J. Cell. Biochem.">
        <title>Cloning the full-length cDNA for rat connective tissue growth factor: implications for skeletal development.</title>
        <authorList>
            <person name="Xu J."/>
            <person name="Smock S.L."/>
            <person name="Safadi F.F."/>
            <person name="Rosenzweig A.B."/>
            <person name="Odgren P.R."/>
            <person name="Marks S.C. Jr."/>
            <person name="Owen T.A."/>
            <person name="Popoff S.N."/>
        </authorList>
    </citation>
    <scope>NUCLEOTIDE SEQUENCE [MRNA]</scope>
</reference>
<reference key="2">
    <citation type="journal article" date="1999" name="J. Biochem.">
        <title>Connective tissue growth factor induces the proliferation, migration, and tube formation of vascular endothelial cells in vitro, and angiogenesis in vivo.</title>
        <authorList>
            <person name="Shimo T."/>
            <person name="Nakanishi T."/>
            <person name="Nishida T."/>
            <person name="Asano M."/>
            <person name="Kanyama M."/>
            <person name="Kuboki T."/>
            <person name="Tamatani T."/>
            <person name="Tezuka K."/>
            <person name="Takemura M."/>
            <person name="Matsumura T."/>
            <person name="Takigawa M."/>
        </authorList>
    </citation>
    <scope>NUCLEOTIDE SEQUENCE [MRNA]</scope>
</reference>
<reference key="3">
    <citation type="submission" date="2004-04" db="EMBL/GenBank/DDBJ databases">
        <title>Connective tissue growth related gene.</title>
        <authorList>
            <person name="Ma L.N."/>
            <person name="Zou Y.L."/>
        </authorList>
    </citation>
    <scope>NUCLEOTIDE SEQUENCE [MRNA]</scope>
    <source>
        <strain>Wistar</strain>
    </source>
</reference>
<protein>
    <recommendedName>
        <fullName evidence="9">CCN family member 2</fullName>
    </recommendedName>
    <alternativeName>
        <fullName>Cellular communication network factor 2</fullName>
    </alternativeName>
    <alternativeName>
        <fullName>Connective tissue growth factor</fullName>
    </alternativeName>
    <alternativeName>
        <fullName>Connective tissue growth-related protein</fullName>
    </alternativeName>
</protein>
<feature type="signal peptide" evidence="4">
    <location>
        <begin position="1"/>
        <end position="24"/>
    </location>
</feature>
<feature type="chain" id="PRO_0000014405" description="CCN family member 2">
    <location>
        <begin position="25"/>
        <end position="347"/>
    </location>
</feature>
<feature type="domain" description="IGFBP N-terminal" evidence="8">
    <location>
        <begin position="25"/>
        <end position="96"/>
    </location>
</feature>
<feature type="domain" description="VWFC" evidence="7">
    <location>
        <begin position="99"/>
        <end position="165"/>
    </location>
</feature>
<feature type="domain" description="TSP type-1" evidence="6">
    <location>
        <begin position="196"/>
        <end position="241"/>
    </location>
</feature>
<feature type="domain" description="CTCK" evidence="5">
    <location>
        <begin position="254"/>
        <end position="328"/>
    </location>
</feature>
<feature type="region of interest" description="Heparin-binding" evidence="3">
    <location>
        <begin position="245"/>
        <end position="347"/>
    </location>
</feature>
<feature type="disulfide bond" evidence="8">
    <location>
        <begin position="27"/>
        <end position="52"/>
    </location>
</feature>
<feature type="disulfide bond" evidence="8">
    <location>
        <begin position="31"/>
        <end position="54"/>
    </location>
</feature>
<feature type="disulfide bond" evidence="8">
    <location>
        <begin position="33"/>
        <end position="55"/>
    </location>
</feature>
<feature type="disulfide bond" evidence="8">
    <location>
        <begin position="41"/>
        <end position="58"/>
    </location>
</feature>
<feature type="disulfide bond" evidence="8">
    <location>
        <begin position="66"/>
        <end position="80"/>
    </location>
</feature>
<feature type="disulfide bond" evidence="8">
    <location>
        <begin position="72"/>
        <end position="93"/>
    </location>
</feature>
<feature type="disulfide bond" evidence="1">
    <location>
        <begin position="254"/>
        <end position="291"/>
    </location>
</feature>
<feature type="disulfide bond" evidence="1">
    <location>
        <begin position="271"/>
        <end position="305"/>
    </location>
</feature>
<feature type="disulfide bond" evidence="1">
    <location>
        <begin position="282"/>
        <end position="321"/>
    </location>
</feature>
<feature type="disulfide bond" evidence="1">
    <location>
        <begin position="285"/>
        <end position="323"/>
    </location>
</feature>
<feature type="disulfide bond" evidence="1">
    <location>
        <begin position="290"/>
        <end position="327"/>
    </location>
</feature>
<feature type="sequence conflict" description="In Ref. 2; BAA82125." evidence="9" ref="2">
    <original>A</original>
    <variation>R</variation>
    <location>
        <position position="35"/>
    </location>
</feature>
<feature type="sequence conflict" description="In Ref. 2; BAA82125." evidence="9" ref="2">
    <original>T</original>
    <variation>P</variation>
    <location>
        <position position="94"/>
    </location>
</feature>
<comment type="function">
    <text evidence="3">Major connective tissue mitoattractant secreted by vascular endothelial cells. Promotes proliferation and differentiation of chondrocytes (By similarity). Is involved in the stimulation of osteoblast differentiation and has a critical role in osteogenesis (By similarity). Mediates heparin- and divalent cation-dependent cell adhesion in many cell types including fibroblasts, myofibroblasts, endothelial and epithelial cells (By similarity). Enhances fibroblast growth factor-induced DNA synthesis (By similarity).</text>
</comment>
<comment type="subunit">
    <text evidence="3">Monomer. Interacts with TSKU.</text>
</comment>
<comment type="subcellular location">
    <subcellularLocation>
        <location evidence="2">Secreted</location>
        <location evidence="2">Extracellular space</location>
        <location evidence="2">Extracellular matrix</location>
    </subcellularLocation>
    <subcellularLocation>
        <location evidence="2">Secreted</location>
    </subcellularLocation>
</comment>
<comment type="similarity">
    <text evidence="9">Belongs to the CCN family.</text>
</comment>
<accession>Q9R1E9</accession>
<accession>Q53YJ0</accession>
<accession>Q9WVS1</accession>
<name>CCN2_RAT</name>
<organism>
    <name type="scientific">Rattus norvegicus</name>
    <name type="common">Rat</name>
    <dbReference type="NCBI Taxonomy" id="10116"/>
    <lineage>
        <taxon>Eukaryota</taxon>
        <taxon>Metazoa</taxon>
        <taxon>Chordata</taxon>
        <taxon>Craniata</taxon>
        <taxon>Vertebrata</taxon>
        <taxon>Euteleostomi</taxon>
        <taxon>Mammalia</taxon>
        <taxon>Eutheria</taxon>
        <taxon>Euarchontoglires</taxon>
        <taxon>Glires</taxon>
        <taxon>Rodentia</taxon>
        <taxon>Myomorpha</taxon>
        <taxon>Muroidea</taxon>
        <taxon>Muridae</taxon>
        <taxon>Murinae</taxon>
        <taxon>Rattus</taxon>
    </lineage>
</organism>
<dbReference type="EMBL" id="AF120275">
    <property type="protein sequence ID" value="AAD39132.1"/>
    <property type="molecule type" value="mRNA"/>
</dbReference>
<dbReference type="EMBL" id="AB023068">
    <property type="protein sequence ID" value="BAA82125.1"/>
    <property type="molecule type" value="mRNA"/>
</dbReference>
<dbReference type="EMBL" id="AY596447">
    <property type="protein sequence ID" value="AAT08023.1"/>
    <property type="molecule type" value="Transcribed_RNA"/>
</dbReference>
<dbReference type="RefSeq" id="NP_071602.1">
    <property type="nucleotide sequence ID" value="NM_022266.2"/>
</dbReference>
<dbReference type="SMR" id="Q9R1E9"/>
<dbReference type="FunCoup" id="Q9R1E9">
    <property type="interactions" value="892"/>
</dbReference>
<dbReference type="STRING" id="10116.ENSRNOP00000020528"/>
<dbReference type="PhosphoSitePlus" id="Q9R1E9"/>
<dbReference type="PaxDb" id="10116-ENSRNOP00000020528"/>
<dbReference type="GeneID" id="64032"/>
<dbReference type="KEGG" id="rno:64032"/>
<dbReference type="AGR" id="RGD:621392"/>
<dbReference type="CTD" id="1490"/>
<dbReference type="RGD" id="621392">
    <property type="gene designation" value="Ccn2"/>
</dbReference>
<dbReference type="VEuPathDB" id="HostDB:ENSRNOG00000015036"/>
<dbReference type="eggNOG" id="ENOG502QQDX">
    <property type="taxonomic scope" value="Eukaryota"/>
</dbReference>
<dbReference type="HOGENOM" id="CLU_063247_1_0_1"/>
<dbReference type="InParanoid" id="Q9R1E9"/>
<dbReference type="OrthoDB" id="7414at9989"/>
<dbReference type="PhylomeDB" id="Q9R1E9"/>
<dbReference type="TreeFam" id="TF326070"/>
<dbReference type="PRO" id="PR:Q9R1E9"/>
<dbReference type="Proteomes" id="UP000002494">
    <property type="component" value="Chromosome 1"/>
</dbReference>
<dbReference type="Bgee" id="ENSRNOG00000015036">
    <property type="expression patterns" value="Expressed in lung and 20 other cell types or tissues"/>
</dbReference>
<dbReference type="ExpressionAtlas" id="Q9R1E9">
    <property type="expression patterns" value="baseline and differential"/>
</dbReference>
<dbReference type="GO" id="GO:0005938">
    <property type="term" value="C:cell cortex"/>
    <property type="evidence" value="ECO:0000314"/>
    <property type="project" value="RGD"/>
</dbReference>
<dbReference type="GO" id="GO:0031012">
    <property type="term" value="C:extracellular matrix"/>
    <property type="evidence" value="ECO:0000266"/>
    <property type="project" value="RGD"/>
</dbReference>
<dbReference type="GO" id="GO:0005576">
    <property type="term" value="C:extracellular region"/>
    <property type="evidence" value="ECO:0000266"/>
    <property type="project" value="RGD"/>
</dbReference>
<dbReference type="GO" id="GO:0005615">
    <property type="term" value="C:extracellular space"/>
    <property type="evidence" value="ECO:0000314"/>
    <property type="project" value="RGD"/>
</dbReference>
<dbReference type="GO" id="GO:0048471">
    <property type="term" value="C:perinuclear region of cytoplasm"/>
    <property type="evidence" value="ECO:0000314"/>
    <property type="project" value="RGD"/>
</dbReference>
<dbReference type="GO" id="GO:0001968">
    <property type="term" value="F:fibronectin binding"/>
    <property type="evidence" value="ECO:0000314"/>
    <property type="project" value="RGD"/>
</dbReference>
<dbReference type="GO" id="GO:0008083">
    <property type="term" value="F:growth factor activity"/>
    <property type="evidence" value="ECO:0000314"/>
    <property type="project" value="RGD"/>
</dbReference>
<dbReference type="GO" id="GO:0008201">
    <property type="term" value="F:heparin binding"/>
    <property type="evidence" value="ECO:0000266"/>
    <property type="project" value="RGD"/>
</dbReference>
<dbReference type="GO" id="GO:0005178">
    <property type="term" value="F:integrin binding"/>
    <property type="evidence" value="ECO:0000266"/>
    <property type="project" value="RGD"/>
</dbReference>
<dbReference type="GO" id="GO:0001525">
    <property type="term" value="P:angiogenesis"/>
    <property type="evidence" value="ECO:0000266"/>
    <property type="project" value="RGD"/>
</dbReference>
<dbReference type="GO" id="GO:0097553">
    <property type="term" value="P:calcium ion transmembrane import into cytosol"/>
    <property type="evidence" value="ECO:0000315"/>
    <property type="project" value="RGD"/>
</dbReference>
<dbReference type="GO" id="GO:0001502">
    <property type="term" value="P:cartilage condensation"/>
    <property type="evidence" value="ECO:0000266"/>
    <property type="project" value="RGD"/>
</dbReference>
<dbReference type="GO" id="GO:0007155">
    <property type="term" value="P:cell adhesion"/>
    <property type="evidence" value="ECO:0000318"/>
    <property type="project" value="GO_Central"/>
</dbReference>
<dbReference type="GO" id="GO:0016477">
    <property type="term" value="P:cell migration"/>
    <property type="evidence" value="ECO:0000266"/>
    <property type="project" value="RGD"/>
</dbReference>
<dbReference type="GO" id="GO:0007160">
    <property type="term" value="P:cell-matrix adhesion"/>
    <property type="evidence" value="ECO:0000266"/>
    <property type="project" value="RGD"/>
</dbReference>
<dbReference type="GO" id="GO:0071398">
    <property type="term" value="P:cellular response to fatty acid"/>
    <property type="evidence" value="ECO:0000270"/>
    <property type="project" value="RGD"/>
</dbReference>
<dbReference type="GO" id="GO:0071333">
    <property type="term" value="P:cellular response to glucose stimulus"/>
    <property type="evidence" value="ECO:0000270"/>
    <property type="project" value="RGD"/>
</dbReference>
<dbReference type="GO" id="GO:0035963">
    <property type="term" value="P:cellular response to interleukin-13"/>
    <property type="evidence" value="ECO:0000270"/>
    <property type="project" value="RGD"/>
</dbReference>
<dbReference type="GO" id="GO:0002062">
    <property type="term" value="P:chondrocyte differentiation"/>
    <property type="evidence" value="ECO:0000266"/>
    <property type="project" value="RGD"/>
</dbReference>
<dbReference type="GO" id="GO:0035988">
    <property type="term" value="P:chondrocyte proliferation"/>
    <property type="evidence" value="ECO:0000266"/>
    <property type="project" value="RGD"/>
</dbReference>
<dbReference type="GO" id="GO:0061448">
    <property type="term" value="P:connective tissue development"/>
    <property type="evidence" value="ECO:0000266"/>
    <property type="project" value="RGD"/>
</dbReference>
<dbReference type="GO" id="GO:0071897">
    <property type="term" value="P:DNA biosynthetic process"/>
    <property type="evidence" value="ECO:0007669"/>
    <property type="project" value="UniProtKB-KW"/>
</dbReference>
<dbReference type="GO" id="GO:0070278">
    <property type="term" value="P:extracellular matrix constituent secretion"/>
    <property type="evidence" value="ECO:0000315"/>
    <property type="project" value="RGD"/>
</dbReference>
<dbReference type="GO" id="GO:0008543">
    <property type="term" value="P:fibroblast growth factor receptor signaling pathway"/>
    <property type="evidence" value="ECO:0000266"/>
    <property type="project" value="RGD"/>
</dbReference>
<dbReference type="GO" id="GO:0007229">
    <property type="term" value="P:integrin-mediated signaling pathway"/>
    <property type="evidence" value="ECO:0000266"/>
    <property type="project" value="RGD"/>
</dbReference>
<dbReference type="GO" id="GO:0035556">
    <property type="term" value="P:intracellular signal transduction"/>
    <property type="evidence" value="ECO:0000314"/>
    <property type="project" value="RGD"/>
</dbReference>
<dbReference type="GO" id="GO:0030324">
    <property type="term" value="P:lung development"/>
    <property type="evidence" value="ECO:0000270"/>
    <property type="project" value="RGD"/>
</dbReference>
<dbReference type="GO" id="GO:0007019">
    <property type="term" value="P:microtubule depolymerization"/>
    <property type="evidence" value="ECO:0000315"/>
    <property type="project" value="RGD"/>
</dbReference>
<dbReference type="GO" id="GO:0010629">
    <property type="term" value="P:negative regulation of gene expression"/>
    <property type="evidence" value="ECO:0000266"/>
    <property type="project" value="RGD"/>
</dbReference>
<dbReference type="GO" id="GO:0001503">
    <property type="term" value="P:ossification"/>
    <property type="evidence" value="ECO:0000266"/>
    <property type="project" value="RGD"/>
</dbReference>
<dbReference type="GO" id="GO:2001235">
    <property type="term" value="P:positive regulation of apoptotic signaling pathway"/>
    <property type="evidence" value="ECO:0000315"/>
    <property type="project" value="RGD"/>
</dbReference>
<dbReference type="GO" id="GO:0060452">
    <property type="term" value="P:positive regulation of cardiac muscle contraction"/>
    <property type="evidence" value="ECO:0000315"/>
    <property type="project" value="RGD"/>
</dbReference>
<dbReference type="GO" id="GO:0050867">
    <property type="term" value="P:positive regulation of cell activation"/>
    <property type="evidence" value="ECO:0000315"/>
    <property type="project" value="RGD"/>
</dbReference>
<dbReference type="GO" id="GO:0045597">
    <property type="term" value="P:positive regulation of cell differentiation"/>
    <property type="evidence" value="ECO:0000266"/>
    <property type="project" value="RGD"/>
</dbReference>
<dbReference type="GO" id="GO:0008284">
    <property type="term" value="P:positive regulation of cell population proliferation"/>
    <property type="evidence" value="ECO:0000315"/>
    <property type="project" value="RGD"/>
</dbReference>
<dbReference type="GO" id="GO:0032967">
    <property type="term" value="P:positive regulation of collagen biosynthetic process"/>
    <property type="evidence" value="ECO:0000315"/>
    <property type="project" value="RGD"/>
</dbReference>
<dbReference type="GO" id="GO:0070374">
    <property type="term" value="P:positive regulation of ERK1 and ERK2 cascade"/>
    <property type="evidence" value="ECO:0000266"/>
    <property type="project" value="RGD"/>
</dbReference>
<dbReference type="GO" id="GO:0070318">
    <property type="term" value="P:positive regulation of G0 to G1 transition"/>
    <property type="evidence" value="ECO:0000315"/>
    <property type="project" value="RGD"/>
</dbReference>
<dbReference type="GO" id="GO:0010628">
    <property type="term" value="P:positive regulation of gene expression"/>
    <property type="evidence" value="ECO:0000315"/>
    <property type="project" value="RGD"/>
</dbReference>
<dbReference type="GO" id="GO:0046330">
    <property type="term" value="P:positive regulation of JNK cascade"/>
    <property type="evidence" value="ECO:0000266"/>
    <property type="project" value="RGD"/>
</dbReference>
<dbReference type="GO" id="GO:0051496">
    <property type="term" value="P:positive regulation of stress fiber assembly"/>
    <property type="evidence" value="ECO:0000266"/>
    <property type="project" value="RGD"/>
</dbReference>
<dbReference type="GO" id="GO:0072593">
    <property type="term" value="P:reactive oxygen species metabolic process"/>
    <property type="evidence" value="ECO:0000266"/>
    <property type="project" value="RGD"/>
</dbReference>
<dbReference type="GO" id="GO:0032330">
    <property type="term" value="P:regulation of chondrocyte differentiation"/>
    <property type="evidence" value="ECO:0000266"/>
    <property type="project" value="RGD"/>
</dbReference>
<dbReference type="GO" id="GO:0043200">
    <property type="term" value="P:response to amino acid"/>
    <property type="evidence" value="ECO:0000270"/>
    <property type="project" value="RGD"/>
</dbReference>
<dbReference type="GO" id="GO:0034059">
    <property type="term" value="P:response to anoxia"/>
    <property type="evidence" value="ECO:0000270"/>
    <property type="project" value="RGD"/>
</dbReference>
<dbReference type="GO" id="GO:0032355">
    <property type="term" value="P:response to estradiol"/>
    <property type="evidence" value="ECO:0000270"/>
    <property type="project" value="RGD"/>
</dbReference>
<dbReference type="GO" id="GO:0070542">
    <property type="term" value="P:response to fatty acid"/>
    <property type="evidence" value="ECO:0000270"/>
    <property type="project" value="RGD"/>
</dbReference>
<dbReference type="GO" id="GO:0051385">
    <property type="term" value="P:response to mineralocorticoid"/>
    <property type="evidence" value="ECO:0000270"/>
    <property type="project" value="RGD"/>
</dbReference>
<dbReference type="GO" id="GO:0043434">
    <property type="term" value="P:response to peptide hormone"/>
    <property type="evidence" value="ECO:0000270"/>
    <property type="project" value="RGD"/>
</dbReference>
<dbReference type="GO" id="GO:0007165">
    <property type="term" value="P:signal transduction"/>
    <property type="evidence" value="ECO:0000318"/>
    <property type="project" value="GO_Central"/>
</dbReference>
<dbReference type="GO" id="GO:0001894">
    <property type="term" value="P:tissue homeostasis"/>
    <property type="evidence" value="ECO:0000266"/>
    <property type="project" value="RGD"/>
</dbReference>
<dbReference type="FunFam" id="2.20.100.10:FF:000036">
    <property type="entry name" value="Connective tissue growth factor (Predicted)"/>
    <property type="match status" value="1"/>
</dbReference>
<dbReference type="Gene3D" id="2.20.100.10">
    <property type="entry name" value="Thrombospondin type-1 (TSP1) repeat"/>
    <property type="match status" value="1"/>
</dbReference>
<dbReference type="InterPro" id="IPR050941">
    <property type="entry name" value="CCN"/>
</dbReference>
<dbReference type="InterPro" id="IPR006207">
    <property type="entry name" value="Cys_knot_C"/>
</dbReference>
<dbReference type="InterPro" id="IPR006208">
    <property type="entry name" value="Glyco_hormone_CN"/>
</dbReference>
<dbReference type="InterPro" id="IPR009030">
    <property type="entry name" value="Growth_fac_rcpt_cys_sf"/>
</dbReference>
<dbReference type="InterPro" id="IPR000867">
    <property type="entry name" value="IGFBP-like"/>
</dbReference>
<dbReference type="InterPro" id="IPR012395">
    <property type="entry name" value="IGFBP_CNN"/>
</dbReference>
<dbReference type="InterPro" id="IPR017891">
    <property type="entry name" value="Insulin_GF-bd_Cys-rich_CS"/>
</dbReference>
<dbReference type="InterPro" id="IPR043973">
    <property type="entry name" value="TSP1_CCN"/>
</dbReference>
<dbReference type="InterPro" id="IPR000884">
    <property type="entry name" value="TSP1_rpt"/>
</dbReference>
<dbReference type="InterPro" id="IPR036383">
    <property type="entry name" value="TSP1_rpt_sf"/>
</dbReference>
<dbReference type="InterPro" id="IPR001007">
    <property type="entry name" value="VWF_dom"/>
</dbReference>
<dbReference type="PANTHER" id="PTHR11348:SF7">
    <property type="entry name" value="CCN FAMILY MEMBER 2"/>
    <property type="match status" value="1"/>
</dbReference>
<dbReference type="PANTHER" id="PTHR11348">
    <property type="entry name" value="CONNECTIVE TISSUE GROWTH FACTOR-RELATED"/>
    <property type="match status" value="1"/>
</dbReference>
<dbReference type="Pfam" id="PF00007">
    <property type="entry name" value="Cys_knot"/>
    <property type="match status" value="1"/>
</dbReference>
<dbReference type="Pfam" id="PF00219">
    <property type="entry name" value="IGFBP"/>
    <property type="match status" value="1"/>
</dbReference>
<dbReference type="Pfam" id="PF19035">
    <property type="entry name" value="TSP1_CCN"/>
    <property type="match status" value="1"/>
</dbReference>
<dbReference type="Pfam" id="PF00093">
    <property type="entry name" value="VWC"/>
    <property type="match status" value="1"/>
</dbReference>
<dbReference type="PIRSF" id="PIRSF036495">
    <property type="entry name" value="IGFBP_rP_CNN"/>
    <property type="match status" value="1"/>
</dbReference>
<dbReference type="SMART" id="SM00041">
    <property type="entry name" value="CT"/>
    <property type="match status" value="1"/>
</dbReference>
<dbReference type="SMART" id="SM00121">
    <property type="entry name" value="IB"/>
    <property type="match status" value="1"/>
</dbReference>
<dbReference type="SMART" id="SM00209">
    <property type="entry name" value="TSP1"/>
    <property type="match status" value="1"/>
</dbReference>
<dbReference type="SMART" id="SM00214">
    <property type="entry name" value="VWC"/>
    <property type="match status" value="1"/>
</dbReference>
<dbReference type="SUPFAM" id="SSF57603">
    <property type="entry name" value="FnI-like domain"/>
    <property type="match status" value="1"/>
</dbReference>
<dbReference type="SUPFAM" id="SSF57184">
    <property type="entry name" value="Growth factor receptor domain"/>
    <property type="match status" value="1"/>
</dbReference>
<dbReference type="SUPFAM" id="SSF82895">
    <property type="entry name" value="TSP-1 type 1 repeat"/>
    <property type="match status" value="1"/>
</dbReference>
<dbReference type="PROSITE" id="PS01185">
    <property type="entry name" value="CTCK_1"/>
    <property type="match status" value="1"/>
</dbReference>
<dbReference type="PROSITE" id="PS01225">
    <property type="entry name" value="CTCK_2"/>
    <property type="match status" value="1"/>
</dbReference>
<dbReference type="PROSITE" id="PS00222">
    <property type="entry name" value="IGFBP_N_1"/>
    <property type="match status" value="1"/>
</dbReference>
<dbReference type="PROSITE" id="PS51323">
    <property type="entry name" value="IGFBP_N_2"/>
    <property type="match status" value="1"/>
</dbReference>
<dbReference type="PROSITE" id="PS50092">
    <property type="entry name" value="TSP1"/>
    <property type="match status" value="1"/>
</dbReference>
<dbReference type="PROSITE" id="PS01208">
    <property type="entry name" value="VWFC_1"/>
    <property type="match status" value="1"/>
</dbReference>
<dbReference type="PROSITE" id="PS50184">
    <property type="entry name" value="VWFC_2"/>
    <property type="match status" value="1"/>
</dbReference>